<keyword id="KW-0030">Aminoacyl-tRNA synthetase</keyword>
<keyword id="KW-0067">ATP-binding</keyword>
<keyword id="KW-0963">Cytoplasm</keyword>
<keyword id="KW-0436">Ligase</keyword>
<keyword id="KW-0460">Magnesium</keyword>
<keyword id="KW-0479">Metal-binding</keyword>
<keyword id="KW-0547">Nucleotide-binding</keyword>
<keyword id="KW-0648">Protein biosynthesis</keyword>
<keyword id="KW-0694">RNA-binding</keyword>
<keyword id="KW-0820">tRNA-binding</keyword>
<feature type="chain" id="PRO_0000126857" description="Phenylalanine--tRNA ligase beta subunit">
    <location>
        <begin position="1"/>
        <end position="798"/>
    </location>
</feature>
<feature type="domain" description="tRNA-binding">
    <location>
        <begin position="39"/>
        <end position="148"/>
    </location>
</feature>
<feature type="domain" description="B5">
    <location>
        <begin position="402"/>
        <end position="477"/>
    </location>
</feature>
<feature type="domain" description="FDX-ACB">
    <location>
        <begin position="704"/>
        <end position="797"/>
    </location>
</feature>
<feature type="binding site" evidence="1">
    <location>
        <position position="455"/>
    </location>
    <ligand>
        <name>Mg(2+)</name>
        <dbReference type="ChEBI" id="CHEBI:18420"/>
        <note>shared with alpha subunit</note>
    </ligand>
</feature>
<feature type="binding site" evidence="1">
    <location>
        <position position="461"/>
    </location>
    <ligand>
        <name>Mg(2+)</name>
        <dbReference type="ChEBI" id="CHEBI:18420"/>
        <note>shared with alpha subunit</note>
    </ligand>
</feature>
<feature type="binding site" evidence="1">
    <location>
        <position position="465"/>
    </location>
    <ligand>
        <name>Mg(2+)</name>
        <dbReference type="ChEBI" id="CHEBI:18420"/>
        <note>shared with alpha subunit</note>
    </ligand>
</feature>
<protein>
    <recommendedName>
        <fullName>Phenylalanine--tRNA ligase beta subunit</fullName>
        <ecNumber>6.1.1.20</ecNumber>
    </recommendedName>
    <alternativeName>
        <fullName>Phenylalanyl-tRNA synthetase beta subunit</fullName>
        <shortName>PheRS</shortName>
    </alternativeName>
</protein>
<name>SYFB_BUCAP</name>
<accession>P59057</accession>
<organism>
    <name type="scientific">Buchnera aphidicola subsp. Schizaphis graminum (strain Sg)</name>
    <dbReference type="NCBI Taxonomy" id="198804"/>
    <lineage>
        <taxon>Bacteria</taxon>
        <taxon>Pseudomonadati</taxon>
        <taxon>Pseudomonadota</taxon>
        <taxon>Gammaproteobacteria</taxon>
        <taxon>Enterobacterales</taxon>
        <taxon>Erwiniaceae</taxon>
        <taxon>Buchnera</taxon>
    </lineage>
</organism>
<sequence>MKFNENWLREWINPKITSVSLRNQIVESGIEIESIHEFNPIFDGFLVGKIVECINPCKGNNLKILKVDVGYKKLLNIVCGASNCRNNIKVVVATIDSILPNGSKIKIKKIKEKLSEGMICSFFELGLFNFCKDIIELPEDIPIGKKINDLFLLKKDTFIKVAVTPNRPDGLSILGIARNIAAINNLKKIRLKKRILPTTIEDQFPITINTEKQSVNYFGRIIQNVNLNVDTPFWMKKKLFFCDLLSDNIIENILNYILIEIGQPLNILNADKIDDVIEIRMAIKKEFLILKNDTRIVLDKDILVFSDKTKILFIPGNINNSDLEPNKNTKNIFLTSYLVDKKSILNILKKIDSNNILDYYSHGVDASLQKYAIEYATYLIVKICGGKIGPINTKKSNFNSLSCSNKIKLYHQNFNKCIDSFVDSSIISNILLCLEYKVNFHKKYWYVFPPSWRFDILIEEDVIGDILRIYNYNNIPLTPLKQNYYFNSKNKDLKSPLLDEAAVLLINRGYYEIITYSFINPSLQDDIIPNNNQILISNPISKDFSSMRLSLWPGLLKTVSYNKNRQQESMRFFERGLCFSIDESQILGIRQEMFLGGVISGFYSKENWFSVRRKVDFYDLKGDLESLLEVICGLNKFEIRHQNILGLHPEQSAKIYLDNKYIGSLGKIHPKIEKKLNLYNSTFLFELSLNYISKLKFYNTEEISKYPTSRRDIAILVSKDIPFLDIITVCKDFFVNKKVEINLFDVYSCKEFDNRKKSLGISFVFQNFKKNLKENEVNLMLHDCIKILKKKFQVVLRK</sequence>
<evidence type="ECO:0000250" key="1"/>
<evidence type="ECO:0000305" key="2"/>
<proteinExistence type="inferred from homology"/>
<dbReference type="EC" id="6.1.1.20"/>
<dbReference type="EMBL" id="AE013218">
    <property type="protein sequence ID" value="AAM67690.1"/>
    <property type="molecule type" value="Genomic_DNA"/>
</dbReference>
<dbReference type="RefSeq" id="WP_011053657.1">
    <property type="nucleotide sequence ID" value="NC_004061.1"/>
</dbReference>
<dbReference type="SMR" id="P59057"/>
<dbReference type="STRING" id="198804.BUsg_122"/>
<dbReference type="GeneID" id="93003592"/>
<dbReference type="KEGG" id="bas:BUsg_122"/>
<dbReference type="eggNOG" id="COG0072">
    <property type="taxonomic scope" value="Bacteria"/>
</dbReference>
<dbReference type="eggNOG" id="COG0073">
    <property type="taxonomic scope" value="Bacteria"/>
</dbReference>
<dbReference type="HOGENOM" id="CLU_016891_0_0_6"/>
<dbReference type="Proteomes" id="UP000000416">
    <property type="component" value="Chromosome"/>
</dbReference>
<dbReference type="GO" id="GO:0009328">
    <property type="term" value="C:phenylalanine-tRNA ligase complex"/>
    <property type="evidence" value="ECO:0007669"/>
    <property type="project" value="TreeGrafter"/>
</dbReference>
<dbReference type="GO" id="GO:0005524">
    <property type="term" value="F:ATP binding"/>
    <property type="evidence" value="ECO:0007669"/>
    <property type="project" value="UniProtKB-UniRule"/>
</dbReference>
<dbReference type="GO" id="GO:0000287">
    <property type="term" value="F:magnesium ion binding"/>
    <property type="evidence" value="ECO:0007669"/>
    <property type="project" value="UniProtKB-UniRule"/>
</dbReference>
<dbReference type="GO" id="GO:0004826">
    <property type="term" value="F:phenylalanine-tRNA ligase activity"/>
    <property type="evidence" value="ECO:0007669"/>
    <property type="project" value="UniProtKB-UniRule"/>
</dbReference>
<dbReference type="GO" id="GO:0000049">
    <property type="term" value="F:tRNA binding"/>
    <property type="evidence" value="ECO:0007669"/>
    <property type="project" value="UniProtKB-KW"/>
</dbReference>
<dbReference type="GO" id="GO:0006432">
    <property type="term" value="P:phenylalanyl-tRNA aminoacylation"/>
    <property type="evidence" value="ECO:0007669"/>
    <property type="project" value="UniProtKB-UniRule"/>
</dbReference>
<dbReference type="CDD" id="cd00769">
    <property type="entry name" value="PheRS_beta_core"/>
    <property type="match status" value="1"/>
</dbReference>
<dbReference type="CDD" id="cd02796">
    <property type="entry name" value="tRNA_bind_bactPheRS"/>
    <property type="match status" value="1"/>
</dbReference>
<dbReference type="FunFam" id="3.30.930.10:FF:000022">
    <property type="entry name" value="Phenylalanine--tRNA ligase beta subunit"/>
    <property type="match status" value="1"/>
</dbReference>
<dbReference type="Gene3D" id="3.30.56.10">
    <property type="match status" value="2"/>
</dbReference>
<dbReference type="Gene3D" id="3.30.930.10">
    <property type="entry name" value="Bira Bifunctional Protein, Domain 2"/>
    <property type="match status" value="1"/>
</dbReference>
<dbReference type="Gene3D" id="3.30.70.380">
    <property type="entry name" value="Ferrodoxin-fold anticodon-binding domain"/>
    <property type="match status" value="1"/>
</dbReference>
<dbReference type="Gene3D" id="2.40.50.140">
    <property type="entry name" value="Nucleic acid-binding proteins"/>
    <property type="match status" value="1"/>
</dbReference>
<dbReference type="Gene3D" id="3.50.40.10">
    <property type="entry name" value="Phenylalanyl-trna Synthetase, Chain B, domain 3"/>
    <property type="match status" value="1"/>
</dbReference>
<dbReference type="HAMAP" id="MF_00283">
    <property type="entry name" value="Phe_tRNA_synth_beta1"/>
    <property type="match status" value="1"/>
</dbReference>
<dbReference type="InterPro" id="IPR045864">
    <property type="entry name" value="aa-tRNA-synth_II/BPL/LPL"/>
</dbReference>
<dbReference type="InterPro" id="IPR005146">
    <property type="entry name" value="B3/B4_tRNA-bd"/>
</dbReference>
<dbReference type="InterPro" id="IPR009061">
    <property type="entry name" value="DNA-bd_dom_put_sf"/>
</dbReference>
<dbReference type="InterPro" id="IPR005121">
    <property type="entry name" value="Fdx_antiC-bd"/>
</dbReference>
<dbReference type="InterPro" id="IPR036690">
    <property type="entry name" value="Fdx_antiC-bd_sf"/>
</dbReference>
<dbReference type="InterPro" id="IPR012340">
    <property type="entry name" value="NA-bd_OB-fold"/>
</dbReference>
<dbReference type="InterPro" id="IPR045060">
    <property type="entry name" value="Phe-tRNA-ligase_IIc_bsu"/>
</dbReference>
<dbReference type="InterPro" id="IPR004532">
    <property type="entry name" value="Phe-tRNA-ligase_IIc_bsu_bact"/>
</dbReference>
<dbReference type="InterPro" id="IPR020825">
    <property type="entry name" value="Phe-tRNA_synthase-like_B3/B4"/>
</dbReference>
<dbReference type="InterPro" id="IPR041616">
    <property type="entry name" value="PheRS_beta_core"/>
</dbReference>
<dbReference type="InterPro" id="IPR002547">
    <property type="entry name" value="tRNA-bd_dom"/>
</dbReference>
<dbReference type="InterPro" id="IPR033714">
    <property type="entry name" value="tRNA_bind_bactPheRS"/>
</dbReference>
<dbReference type="InterPro" id="IPR005147">
    <property type="entry name" value="tRNA_synthase_B5-dom"/>
</dbReference>
<dbReference type="NCBIfam" id="TIGR00472">
    <property type="entry name" value="pheT_bact"/>
    <property type="match status" value="1"/>
</dbReference>
<dbReference type="NCBIfam" id="NF045760">
    <property type="entry name" value="YtpR"/>
    <property type="match status" value="1"/>
</dbReference>
<dbReference type="PANTHER" id="PTHR10947:SF0">
    <property type="entry name" value="PHENYLALANINE--TRNA LIGASE BETA SUBUNIT"/>
    <property type="match status" value="1"/>
</dbReference>
<dbReference type="PANTHER" id="PTHR10947">
    <property type="entry name" value="PHENYLALANYL-TRNA SYNTHETASE BETA CHAIN AND LEUCINE-RICH REPEAT-CONTAINING PROTEIN 47"/>
    <property type="match status" value="1"/>
</dbReference>
<dbReference type="Pfam" id="PF03483">
    <property type="entry name" value="B3_4"/>
    <property type="match status" value="1"/>
</dbReference>
<dbReference type="Pfam" id="PF03484">
    <property type="entry name" value="B5"/>
    <property type="match status" value="1"/>
</dbReference>
<dbReference type="Pfam" id="PF03147">
    <property type="entry name" value="FDX-ACB"/>
    <property type="match status" value="1"/>
</dbReference>
<dbReference type="Pfam" id="PF01588">
    <property type="entry name" value="tRNA_bind"/>
    <property type="match status" value="1"/>
</dbReference>
<dbReference type="Pfam" id="PF17759">
    <property type="entry name" value="tRNA_synthFbeta"/>
    <property type="match status" value="1"/>
</dbReference>
<dbReference type="SMART" id="SM00873">
    <property type="entry name" value="B3_4"/>
    <property type="match status" value="1"/>
</dbReference>
<dbReference type="SMART" id="SM00874">
    <property type="entry name" value="B5"/>
    <property type="match status" value="1"/>
</dbReference>
<dbReference type="SMART" id="SM00896">
    <property type="entry name" value="FDX-ACB"/>
    <property type="match status" value="1"/>
</dbReference>
<dbReference type="SUPFAM" id="SSF54991">
    <property type="entry name" value="Anticodon-binding domain of PheRS"/>
    <property type="match status" value="1"/>
</dbReference>
<dbReference type="SUPFAM" id="SSF55681">
    <property type="entry name" value="Class II aaRS and biotin synthetases"/>
    <property type="match status" value="1"/>
</dbReference>
<dbReference type="SUPFAM" id="SSF50249">
    <property type="entry name" value="Nucleic acid-binding proteins"/>
    <property type="match status" value="1"/>
</dbReference>
<dbReference type="SUPFAM" id="SSF56037">
    <property type="entry name" value="PheT/TilS domain"/>
    <property type="match status" value="1"/>
</dbReference>
<dbReference type="SUPFAM" id="SSF46955">
    <property type="entry name" value="Putative DNA-binding domain"/>
    <property type="match status" value="1"/>
</dbReference>
<dbReference type="PROSITE" id="PS51483">
    <property type="entry name" value="B5"/>
    <property type="match status" value="1"/>
</dbReference>
<dbReference type="PROSITE" id="PS51447">
    <property type="entry name" value="FDX_ACB"/>
    <property type="match status" value="1"/>
</dbReference>
<dbReference type="PROSITE" id="PS50886">
    <property type="entry name" value="TRBD"/>
    <property type="match status" value="1"/>
</dbReference>
<gene>
    <name type="primary">pheT</name>
    <name type="ordered locus">BUsg_122</name>
</gene>
<reference key="1">
    <citation type="journal article" date="2002" name="Science">
        <title>50 million years of genomic stasis in endosymbiotic bacteria.</title>
        <authorList>
            <person name="Tamas I."/>
            <person name="Klasson L."/>
            <person name="Canbaeck B."/>
            <person name="Naeslund A.K."/>
            <person name="Eriksson A.-S."/>
            <person name="Wernegreen J.J."/>
            <person name="Sandstroem J.P."/>
            <person name="Moran N.A."/>
            <person name="Andersson S.G.E."/>
        </authorList>
    </citation>
    <scope>NUCLEOTIDE SEQUENCE [LARGE SCALE GENOMIC DNA]</scope>
    <source>
        <strain>Sg</strain>
    </source>
</reference>
<comment type="catalytic activity">
    <reaction>
        <text>tRNA(Phe) + L-phenylalanine + ATP = L-phenylalanyl-tRNA(Phe) + AMP + diphosphate + H(+)</text>
        <dbReference type="Rhea" id="RHEA:19413"/>
        <dbReference type="Rhea" id="RHEA-COMP:9668"/>
        <dbReference type="Rhea" id="RHEA-COMP:9699"/>
        <dbReference type="ChEBI" id="CHEBI:15378"/>
        <dbReference type="ChEBI" id="CHEBI:30616"/>
        <dbReference type="ChEBI" id="CHEBI:33019"/>
        <dbReference type="ChEBI" id="CHEBI:58095"/>
        <dbReference type="ChEBI" id="CHEBI:78442"/>
        <dbReference type="ChEBI" id="CHEBI:78531"/>
        <dbReference type="ChEBI" id="CHEBI:456215"/>
        <dbReference type="EC" id="6.1.1.20"/>
    </reaction>
</comment>
<comment type="cofactor">
    <cofactor evidence="1">
        <name>Mg(2+)</name>
        <dbReference type="ChEBI" id="CHEBI:18420"/>
    </cofactor>
    <text evidence="1">Binds 2 magnesium ions per tetramer.</text>
</comment>
<comment type="subunit">
    <text evidence="1">Tetramer of two alpha and two beta subunits.</text>
</comment>
<comment type="subcellular location">
    <subcellularLocation>
        <location evidence="1">Cytoplasm</location>
    </subcellularLocation>
</comment>
<comment type="similarity">
    <text evidence="2">Belongs to the phenylalanyl-tRNA synthetase beta subunit family. Type 1 subfamily.</text>
</comment>
<comment type="caution">
    <text evidence="2">Lacks the conserved glutamate residue in position 464 that binds magnesium; it is replaced by a glycine residue.</text>
</comment>